<name>H3B03_CYRHA</name>
<accession>D2Y1Z3</accession>
<dbReference type="EMBL" id="GU292870">
    <property type="protein sequence ID" value="ADB56686.1"/>
    <property type="molecule type" value="mRNA"/>
</dbReference>
<dbReference type="SMR" id="D2Y1Z3"/>
<dbReference type="ArachnoServer" id="AS001740">
    <property type="toxin name" value="mu-theraphotoxin-Hhn2j"/>
</dbReference>
<dbReference type="GO" id="GO:0005576">
    <property type="term" value="C:extracellular region"/>
    <property type="evidence" value="ECO:0007669"/>
    <property type="project" value="UniProtKB-SubCell"/>
</dbReference>
<dbReference type="GO" id="GO:0044231">
    <property type="term" value="C:host cell presynaptic membrane"/>
    <property type="evidence" value="ECO:0007669"/>
    <property type="project" value="UniProtKB-KW"/>
</dbReference>
<dbReference type="GO" id="GO:0008200">
    <property type="term" value="F:ion channel inhibitor activity"/>
    <property type="evidence" value="ECO:0007669"/>
    <property type="project" value="InterPro"/>
</dbReference>
<dbReference type="GO" id="GO:0017080">
    <property type="term" value="F:sodium channel regulator activity"/>
    <property type="evidence" value="ECO:0007669"/>
    <property type="project" value="UniProtKB-KW"/>
</dbReference>
<dbReference type="GO" id="GO:0090729">
    <property type="term" value="F:toxin activity"/>
    <property type="evidence" value="ECO:0007669"/>
    <property type="project" value="UniProtKB-KW"/>
</dbReference>
<dbReference type="InterPro" id="IPR011696">
    <property type="entry name" value="Huwentoxin-1"/>
</dbReference>
<dbReference type="InterPro" id="IPR013140">
    <property type="entry name" value="Huwentoxin_CS1"/>
</dbReference>
<dbReference type="Pfam" id="PF07740">
    <property type="entry name" value="Toxin_12"/>
    <property type="match status" value="1"/>
</dbReference>
<dbReference type="SUPFAM" id="SSF57059">
    <property type="entry name" value="omega toxin-like"/>
    <property type="match status" value="1"/>
</dbReference>
<dbReference type="PROSITE" id="PS60021">
    <property type="entry name" value="HWTX_1"/>
    <property type="match status" value="1"/>
</dbReference>
<comment type="function">
    <text evidence="1">Lethal neurotoxin. Selectively blocks tetrodotoxin-sensitive voltage-gated sodium channels (Nav). Does not affect tetrodotoxin-resistant voltage-gated sodium channels or calcium channels (By similarity).</text>
</comment>
<comment type="subunit">
    <text evidence="1">Monomer.</text>
</comment>
<comment type="subcellular location">
    <subcellularLocation>
        <location evidence="1">Secreted</location>
    </subcellularLocation>
</comment>
<comment type="tissue specificity">
    <text>Expressed by the venom gland.</text>
</comment>
<comment type="domain">
    <text evidence="1">The presence of a 'disulfide through disulfide knot' structurally defines this protein as a knottin.</text>
</comment>
<comment type="similarity">
    <text evidence="3">Belongs to the neurotoxin 10 (Hwtx-1) family. 15 (Hntx-3) subfamily.</text>
</comment>
<reference key="1">
    <citation type="journal article" date="2010" name="J. Proteome Res.">
        <title>Molecular diversification of peptide toxins from the tarantula Haplopelma hainanum (Ornithoctonus hainana) venom based on transcriptomic, peptidomic, and genomic analyses.</title>
        <authorList>
            <person name="Tang X."/>
            <person name="Zhang Y."/>
            <person name="Hu W."/>
            <person name="Xu D."/>
            <person name="Tao H."/>
            <person name="Yang X."/>
            <person name="Li Y."/>
            <person name="Jiang L."/>
            <person name="Liang S."/>
        </authorList>
    </citation>
    <scope>NUCLEOTIDE SEQUENCE [LARGE SCALE MRNA]</scope>
    <source>
        <tissue>Venom gland</tissue>
    </source>
</reference>
<protein>
    <recommendedName>
        <fullName>Mu-theraphotoxin-Hhn2j 3</fullName>
        <shortName>Mu-TRTX-Hhn2j</shortName>
    </recommendedName>
    <alternativeName>
        <fullName>Hainantoxin-III-2.3</fullName>
        <shortName>HNTX-III-2.3</shortName>
    </alternativeName>
</protein>
<organism>
    <name type="scientific">Cyriopagopus hainanus</name>
    <name type="common">Chinese bird spider</name>
    <name type="synonym">Haplopelma hainanum</name>
    <dbReference type="NCBI Taxonomy" id="209901"/>
    <lineage>
        <taxon>Eukaryota</taxon>
        <taxon>Metazoa</taxon>
        <taxon>Ecdysozoa</taxon>
        <taxon>Arthropoda</taxon>
        <taxon>Chelicerata</taxon>
        <taxon>Arachnida</taxon>
        <taxon>Araneae</taxon>
        <taxon>Mygalomorphae</taxon>
        <taxon>Theraphosidae</taxon>
        <taxon>Haplopelma</taxon>
    </lineage>
</organism>
<sequence>MKALMFLALAGLVLLFVVGYASESEEKEFPIELLSKIFAVDVFKGEERGCKGFGDSCTPGKNECCPNHACSNKHKWCKVYLGK</sequence>
<proteinExistence type="evidence at transcript level"/>
<feature type="signal peptide" evidence="2">
    <location>
        <begin position="1"/>
        <end position="21"/>
    </location>
</feature>
<feature type="propeptide" id="PRO_0000400532" evidence="1">
    <location>
        <begin position="22"/>
        <end position="48"/>
    </location>
</feature>
<feature type="peptide" id="PRO_0000400533" description="Mu-theraphotoxin-Hhn2j 3">
    <location>
        <begin position="49"/>
        <end position="81"/>
    </location>
</feature>
<feature type="modified residue" description="Leucine amide" evidence="1">
    <location>
        <position position="81"/>
    </location>
</feature>
<feature type="disulfide bond" evidence="1">
    <location>
        <begin position="50"/>
        <end position="65"/>
    </location>
</feature>
<feature type="disulfide bond" evidence="1">
    <location>
        <begin position="57"/>
        <end position="70"/>
    </location>
</feature>
<feature type="disulfide bond" evidence="1">
    <location>
        <begin position="64"/>
        <end position="77"/>
    </location>
</feature>
<evidence type="ECO:0000250" key="1"/>
<evidence type="ECO:0000255" key="2"/>
<evidence type="ECO:0000305" key="3"/>
<keyword id="KW-0027">Amidation</keyword>
<keyword id="KW-1015">Disulfide bond</keyword>
<keyword id="KW-0872">Ion channel impairing toxin</keyword>
<keyword id="KW-0960">Knottin</keyword>
<keyword id="KW-0528">Neurotoxin</keyword>
<keyword id="KW-0638">Presynaptic neurotoxin</keyword>
<keyword id="KW-0964">Secreted</keyword>
<keyword id="KW-0732">Signal</keyword>
<keyword id="KW-0800">Toxin</keyword>
<keyword id="KW-0738">Voltage-gated sodium channel impairing toxin</keyword>